<proteinExistence type="inferred from homology"/>
<organism>
    <name type="scientific">Parasynechococcus marenigrum (strain WH8102)</name>
    <dbReference type="NCBI Taxonomy" id="84588"/>
    <lineage>
        <taxon>Bacteria</taxon>
        <taxon>Bacillati</taxon>
        <taxon>Cyanobacteriota</taxon>
        <taxon>Cyanophyceae</taxon>
        <taxon>Synechococcales</taxon>
        <taxon>Prochlorococcaceae</taxon>
        <taxon>Parasynechococcus</taxon>
        <taxon>Parasynechococcus marenigrum</taxon>
    </lineage>
</organism>
<feature type="signal peptide" evidence="1">
    <location>
        <begin position="1"/>
        <end position="23"/>
    </location>
</feature>
<feature type="chain" id="PRO_0000239684" description="Photosystem II assembly lipoprotein Ycf48" evidence="1">
    <location>
        <begin position="24"/>
        <end position="333"/>
    </location>
</feature>
<feature type="lipid moiety-binding region" description="N-palmitoyl cysteine" evidence="1">
    <location>
        <position position="24"/>
    </location>
</feature>
<feature type="lipid moiety-binding region" description="S-diacylglycerol cysteine" evidence="1">
    <location>
        <position position="24"/>
    </location>
</feature>
<keyword id="KW-0449">Lipoprotein</keyword>
<keyword id="KW-0472">Membrane</keyword>
<keyword id="KW-0564">Palmitate</keyword>
<keyword id="KW-0602">Photosynthesis</keyword>
<keyword id="KW-0604">Photosystem II</keyword>
<keyword id="KW-0732">Signal</keyword>
<keyword id="KW-0793">Thylakoid</keyword>
<reference key="1">
    <citation type="journal article" date="2003" name="Nature">
        <title>The genome of a motile marine Synechococcus.</title>
        <authorList>
            <person name="Palenik B."/>
            <person name="Brahamsha B."/>
            <person name="Larimer F.W."/>
            <person name="Land M.L."/>
            <person name="Hauser L."/>
            <person name="Chain P."/>
            <person name="Lamerdin J.E."/>
            <person name="Regala W."/>
            <person name="Allen E.E."/>
            <person name="McCarren J."/>
            <person name="Paulsen I.T."/>
            <person name="Dufresne A."/>
            <person name="Partensky F."/>
            <person name="Webb E.A."/>
            <person name="Waterbury J."/>
        </authorList>
    </citation>
    <scope>NUCLEOTIDE SEQUENCE [LARGE SCALE GENOMIC DNA]</scope>
    <source>
        <strain>WH8102</strain>
    </source>
</reference>
<evidence type="ECO:0000255" key="1">
    <source>
        <dbReference type="HAMAP-Rule" id="MF_01348"/>
    </source>
</evidence>
<comment type="function">
    <text evidence="1">A factor required for optimal assembly of photosystem II (PSII), acting in the early stages of PSII assembly. Also plays a role in replacement of photodamaged D1 (psbA). Assists YidC in synthesis of chlorophyll-binding proteins.</text>
</comment>
<comment type="subunit">
    <text evidence="1">Part of early PSII assembly complexes which includes D1 (psbA) and PsbI; not found in mature PSII. Binds to the lumenal side of PSII complexes. Interacts with YidC.</text>
</comment>
<comment type="subcellular location">
    <subcellularLocation>
        <location evidence="1">Cellular thylakoid membrane</location>
        <topology evidence="1">Lipid-anchor</topology>
        <orientation evidence="1">Lumenal side</orientation>
    </subcellularLocation>
    <text evidence="1">Associated with a PSII precusor complex on the lumenal side of the thylakoid membrane.</text>
</comment>
<comment type="domain">
    <text evidence="1">A 7-bladed beta-propeller torus, about 55 by 55 Angstroms, with a depth of about 25 Angstroms and a central pore.</text>
</comment>
<comment type="similarity">
    <text evidence="1">Belongs to the Ycf48 family.</text>
</comment>
<gene>
    <name evidence="1" type="primary">ycf48</name>
    <name type="ordered locus">SYNW0205</name>
</gene>
<accession>Q7U9P8</accession>
<sequence>MTRFVSSAINLLLVLVLGVSLSGCVTTRLPVASTSPWQALNLDTEANPLDVAFTDSRHGYLVGSNRMIRETNDGGATWNDRSLDLPEEENFRLISIDFNGDEGWIAGQPGLLMHTSDGGQNWTRLFLDTKLPGEPYLITALGSHSAEMATNVGAVYETHDDGGSWEALVTDAAGAVRDLRRGDDGSYVSVSSLGNFYATWQPGDSVWQVHQRVSSQRLQSIGYQPDGNLWMVARGAQIRLNDESGNLESWTKAIIPITNGYGYMDMAWDEDGAIWAGGGNGTLLVSRDGADSWEIDPVGDRQPSNFTRMVFDWDHAFVLGERGNLLRWVGNAV</sequence>
<dbReference type="EMBL" id="BX569689">
    <property type="protein sequence ID" value="CAE06720.1"/>
    <property type="molecule type" value="Genomic_DNA"/>
</dbReference>
<dbReference type="RefSeq" id="WP_011127081.1">
    <property type="nucleotide sequence ID" value="NC_005070.1"/>
</dbReference>
<dbReference type="SMR" id="Q7U9P8"/>
<dbReference type="STRING" id="84588.SYNW0205"/>
<dbReference type="KEGG" id="syw:SYNW0205"/>
<dbReference type="eggNOG" id="COG4447">
    <property type="taxonomic scope" value="Bacteria"/>
</dbReference>
<dbReference type="HOGENOM" id="CLU_057027_0_0_3"/>
<dbReference type="Proteomes" id="UP000001422">
    <property type="component" value="Chromosome"/>
</dbReference>
<dbReference type="GO" id="GO:0009523">
    <property type="term" value="C:photosystem II"/>
    <property type="evidence" value="ECO:0007669"/>
    <property type="project" value="UniProtKB-KW"/>
</dbReference>
<dbReference type="GO" id="GO:0031676">
    <property type="term" value="C:plasma membrane-derived thylakoid membrane"/>
    <property type="evidence" value="ECO:0007669"/>
    <property type="project" value="UniProtKB-SubCell"/>
</dbReference>
<dbReference type="GO" id="GO:0031977">
    <property type="term" value="C:thylakoid lumen"/>
    <property type="evidence" value="ECO:0007669"/>
    <property type="project" value="UniProtKB-UniRule"/>
</dbReference>
<dbReference type="GO" id="GO:0015979">
    <property type="term" value="P:photosynthesis"/>
    <property type="evidence" value="ECO:0007669"/>
    <property type="project" value="UniProtKB-KW"/>
</dbReference>
<dbReference type="Gene3D" id="2.130.10.10">
    <property type="entry name" value="YVTN repeat-like/Quinoprotein amine dehydrogenase"/>
    <property type="match status" value="1"/>
</dbReference>
<dbReference type="HAMAP" id="MF_01348">
    <property type="entry name" value="Ycf48"/>
    <property type="match status" value="1"/>
</dbReference>
<dbReference type="InterPro" id="IPR028203">
    <property type="entry name" value="PSII_CF48-like_dom"/>
</dbReference>
<dbReference type="InterPro" id="IPR015943">
    <property type="entry name" value="WD40/YVTN_repeat-like_dom_sf"/>
</dbReference>
<dbReference type="InterPro" id="IPR016705">
    <property type="entry name" value="Ycf48/Hcf136"/>
</dbReference>
<dbReference type="NCBIfam" id="NF010237">
    <property type="entry name" value="PRK13684.1"/>
    <property type="match status" value="1"/>
</dbReference>
<dbReference type="PANTHER" id="PTHR47199">
    <property type="entry name" value="PHOTOSYSTEM II STABILITY/ASSEMBLY FACTOR HCF136, CHLOROPLASTIC"/>
    <property type="match status" value="1"/>
</dbReference>
<dbReference type="PANTHER" id="PTHR47199:SF2">
    <property type="entry name" value="PHOTOSYSTEM II STABILITY_ASSEMBLY FACTOR HCF136, CHLOROPLASTIC"/>
    <property type="match status" value="1"/>
</dbReference>
<dbReference type="Pfam" id="PF14870">
    <property type="entry name" value="PSII_BNR"/>
    <property type="match status" value="1"/>
</dbReference>
<dbReference type="PIRSF" id="PIRSF017875">
    <property type="entry name" value="PSII_HCF136"/>
    <property type="match status" value="1"/>
</dbReference>
<dbReference type="SUPFAM" id="SSF110296">
    <property type="entry name" value="Oligoxyloglucan reducing end-specific cellobiohydrolase"/>
    <property type="match status" value="1"/>
</dbReference>
<dbReference type="PROSITE" id="PS51257">
    <property type="entry name" value="PROKAR_LIPOPROTEIN"/>
    <property type="match status" value="1"/>
</dbReference>
<protein>
    <recommendedName>
        <fullName evidence="1">Photosystem II assembly lipoprotein Ycf48</fullName>
    </recommendedName>
</protein>
<name>YCF48_PARMW</name>